<protein>
    <recommendedName>
        <fullName evidence="1">Small ribosomal subunit protein uS8</fullName>
    </recommendedName>
    <alternativeName>
        <fullName evidence="2">30S ribosomal protein S8</fullName>
    </alternativeName>
</protein>
<reference key="1">
    <citation type="submission" date="2009-01" db="EMBL/GenBank/DDBJ databases">
        <title>Complete sequence of chromosome of Caldicellulosiruptor becscii DSM 6725.</title>
        <authorList>
            <person name="Lucas S."/>
            <person name="Copeland A."/>
            <person name="Lapidus A."/>
            <person name="Glavina del Rio T."/>
            <person name="Tice H."/>
            <person name="Bruce D."/>
            <person name="Goodwin L."/>
            <person name="Pitluck S."/>
            <person name="Sims D."/>
            <person name="Meincke L."/>
            <person name="Brettin T."/>
            <person name="Detter J.C."/>
            <person name="Han C."/>
            <person name="Larimer F."/>
            <person name="Land M."/>
            <person name="Hauser L."/>
            <person name="Kyrpides N."/>
            <person name="Ovchinnikova G."/>
            <person name="Kataeva I."/>
            <person name="Adams M.W.W."/>
        </authorList>
    </citation>
    <scope>NUCLEOTIDE SEQUENCE [LARGE SCALE GENOMIC DNA]</scope>
    <source>
        <strain>ATCC BAA-1888 / DSM 6725 / KCTC 15123 / Z-1320</strain>
    </source>
</reference>
<keyword id="KW-0687">Ribonucleoprotein</keyword>
<keyword id="KW-0689">Ribosomal protein</keyword>
<keyword id="KW-0694">RNA-binding</keyword>
<keyword id="KW-0699">rRNA-binding</keyword>
<dbReference type="EMBL" id="CP001393">
    <property type="protein sequence ID" value="ACM60825.1"/>
    <property type="molecule type" value="Genomic_DNA"/>
</dbReference>
<dbReference type="RefSeq" id="WP_013429976.1">
    <property type="nucleotide sequence ID" value="NC_012034.1"/>
</dbReference>
<dbReference type="SMR" id="B9MKG7"/>
<dbReference type="STRING" id="521460.Athe_1731"/>
<dbReference type="GeneID" id="31773088"/>
<dbReference type="KEGG" id="ate:Athe_1731"/>
<dbReference type="eggNOG" id="COG0096">
    <property type="taxonomic scope" value="Bacteria"/>
</dbReference>
<dbReference type="HOGENOM" id="CLU_098428_0_2_9"/>
<dbReference type="Proteomes" id="UP000007723">
    <property type="component" value="Chromosome"/>
</dbReference>
<dbReference type="GO" id="GO:1990904">
    <property type="term" value="C:ribonucleoprotein complex"/>
    <property type="evidence" value="ECO:0007669"/>
    <property type="project" value="UniProtKB-KW"/>
</dbReference>
<dbReference type="GO" id="GO:0005840">
    <property type="term" value="C:ribosome"/>
    <property type="evidence" value="ECO:0007669"/>
    <property type="project" value="UniProtKB-KW"/>
</dbReference>
<dbReference type="GO" id="GO:0019843">
    <property type="term" value="F:rRNA binding"/>
    <property type="evidence" value="ECO:0007669"/>
    <property type="project" value="UniProtKB-UniRule"/>
</dbReference>
<dbReference type="GO" id="GO:0003735">
    <property type="term" value="F:structural constituent of ribosome"/>
    <property type="evidence" value="ECO:0007669"/>
    <property type="project" value="InterPro"/>
</dbReference>
<dbReference type="GO" id="GO:0006412">
    <property type="term" value="P:translation"/>
    <property type="evidence" value="ECO:0007669"/>
    <property type="project" value="UniProtKB-UniRule"/>
</dbReference>
<dbReference type="FunFam" id="3.30.1370.30:FF:000002">
    <property type="entry name" value="30S ribosomal protein S8"/>
    <property type="match status" value="1"/>
</dbReference>
<dbReference type="FunFam" id="3.30.1490.10:FF:000001">
    <property type="entry name" value="30S ribosomal protein S8"/>
    <property type="match status" value="1"/>
</dbReference>
<dbReference type="Gene3D" id="3.30.1370.30">
    <property type="match status" value="1"/>
</dbReference>
<dbReference type="Gene3D" id="3.30.1490.10">
    <property type="match status" value="1"/>
</dbReference>
<dbReference type="HAMAP" id="MF_01302_B">
    <property type="entry name" value="Ribosomal_uS8_B"/>
    <property type="match status" value="1"/>
</dbReference>
<dbReference type="InterPro" id="IPR000630">
    <property type="entry name" value="Ribosomal_uS8"/>
</dbReference>
<dbReference type="InterPro" id="IPR047863">
    <property type="entry name" value="Ribosomal_uS8_CS"/>
</dbReference>
<dbReference type="InterPro" id="IPR035987">
    <property type="entry name" value="Ribosomal_uS8_sf"/>
</dbReference>
<dbReference type="NCBIfam" id="NF001109">
    <property type="entry name" value="PRK00136.1"/>
    <property type="match status" value="1"/>
</dbReference>
<dbReference type="PANTHER" id="PTHR11758">
    <property type="entry name" value="40S RIBOSOMAL PROTEIN S15A"/>
    <property type="match status" value="1"/>
</dbReference>
<dbReference type="Pfam" id="PF00410">
    <property type="entry name" value="Ribosomal_S8"/>
    <property type="match status" value="1"/>
</dbReference>
<dbReference type="SUPFAM" id="SSF56047">
    <property type="entry name" value="Ribosomal protein S8"/>
    <property type="match status" value="1"/>
</dbReference>
<dbReference type="PROSITE" id="PS00053">
    <property type="entry name" value="RIBOSOMAL_S8"/>
    <property type="match status" value="1"/>
</dbReference>
<name>RS8_CALBD</name>
<evidence type="ECO:0000255" key="1">
    <source>
        <dbReference type="HAMAP-Rule" id="MF_01302"/>
    </source>
</evidence>
<evidence type="ECO:0000305" key="2"/>
<feature type="chain" id="PRO_1000165302" description="Small ribosomal subunit protein uS8">
    <location>
        <begin position="1"/>
        <end position="132"/>
    </location>
</feature>
<proteinExistence type="inferred from homology"/>
<accession>B9MKG7</accession>
<comment type="function">
    <text evidence="1">One of the primary rRNA binding proteins, it binds directly to 16S rRNA central domain where it helps coordinate assembly of the platform of the 30S subunit.</text>
</comment>
<comment type="subunit">
    <text evidence="1">Part of the 30S ribosomal subunit. Contacts proteins S5 and S12.</text>
</comment>
<comment type="similarity">
    <text evidence="1">Belongs to the universal ribosomal protein uS8 family.</text>
</comment>
<sequence length="132" mass="14707">MYVIDPIADMLTRIRNANNARHEIVDIPASKMKKAIAQILLEEGFIKDYEIIDDGKNGIIRIRLKYGPNKERAITGLKRISKPGRRVYAGKDELPRVLGGLGIAIISTSKGIMTDKKARKEGVGGEVLCYVW</sequence>
<gene>
    <name evidence="1" type="primary">rpsH</name>
    <name type="ordered locus">Athe_1731</name>
</gene>
<organism>
    <name type="scientific">Caldicellulosiruptor bescii (strain ATCC BAA-1888 / DSM 6725 / KCTC 15123 / Z-1320)</name>
    <name type="common">Anaerocellum thermophilum</name>
    <dbReference type="NCBI Taxonomy" id="521460"/>
    <lineage>
        <taxon>Bacteria</taxon>
        <taxon>Bacillati</taxon>
        <taxon>Bacillota</taxon>
        <taxon>Bacillota incertae sedis</taxon>
        <taxon>Caldicellulosiruptorales</taxon>
        <taxon>Caldicellulosiruptoraceae</taxon>
        <taxon>Caldicellulosiruptor</taxon>
    </lineage>
</organism>